<accession>Q3Z2Z3</accession>
<reference key="1">
    <citation type="journal article" date="2005" name="Nucleic Acids Res.">
        <title>Genome dynamics and diversity of Shigella species, the etiologic agents of bacillary dysentery.</title>
        <authorList>
            <person name="Yang F."/>
            <person name="Yang J."/>
            <person name="Zhang X."/>
            <person name="Chen L."/>
            <person name="Jiang Y."/>
            <person name="Yan Y."/>
            <person name="Tang X."/>
            <person name="Wang J."/>
            <person name="Xiong Z."/>
            <person name="Dong J."/>
            <person name="Xue Y."/>
            <person name="Zhu Y."/>
            <person name="Xu X."/>
            <person name="Sun L."/>
            <person name="Chen S."/>
            <person name="Nie H."/>
            <person name="Peng J."/>
            <person name="Xu J."/>
            <person name="Wang Y."/>
            <person name="Yuan Z."/>
            <person name="Wen Y."/>
            <person name="Yao Z."/>
            <person name="Shen Y."/>
            <person name="Qiang B."/>
            <person name="Hou Y."/>
            <person name="Yu J."/>
            <person name="Jin Q."/>
        </authorList>
    </citation>
    <scope>NUCLEOTIDE SEQUENCE [LARGE SCALE GENOMIC DNA]</scope>
    <source>
        <strain>Ss046</strain>
    </source>
</reference>
<evidence type="ECO:0000255" key="1">
    <source>
        <dbReference type="HAMAP-Rule" id="MF_01726"/>
    </source>
</evidence>
<sequence>MGQSKKLNKQPSSLSPLVQLAGIRKCFDGKEVIPQLDLTINNGEFLTLLGPSGCGKTTVLRLIAGLETVDSGRIMLDNEDITHVPAENRYVNTVFQSYALFPHMTVFENVAFGLRMQKTPAAEITPRVMEALRMVQLETFAQRKPHQLSGGQQQRVAIARAVVNKPRLLLLDESLSALDYKLRKQMQNELKALQRKLGITFVFVTHDQEEALTMSDRIVVMREGRIEQDGTPREIYEEPKNLFVAGFIGEINMFNATVIERLDEQRVRANVEGRECNIYVNFAVEPGQKLHVLLRPEDLRVEEINDDNHAEGLIGYVRERNYKGMTLESVVELENGKMVMVSEFFNEDDPDFDHSLDQKMAINWVESWEVVLADEEHK</sequence>
<feature type="chain" id="PRO_0000286287" description="Spermidine/putrescine import ATP-binding protein PotA">
    <location>
        <begin position="1"/>
        <end position="378"/>
    </location>
</feature>
<feature type="domain" description="ABC transporter" evidence="1">
    <location>
        <begin position="18"/>
        <end position="248"/>
    </location>
</feature>
<feature type="binding site" evidence="1">
    <location>
        <begin position="50"/>
        <end position="57"/>
    </location>
    <ligand>
        <name>ATP</name>
        <dbReference type="ChEBI" id="CHEBI:30616"/>
    </ligand>
</feature>
<organism>
    <name type="scientific">Shigella sonnei (strain Ss046)</name>
    <dbReference type="NCBI Taxonomy" id="300269"/>
    <lineage>
        <taxon>Bacteria</taxon>
        <taxon>Pseudomonadati</taxon>
        <taxon>Pseudomonadota</taxon>
        <taxon>Gammaproteobacteria</taxon>
        <taxon>Enterobacterales</taxon>
        <taxon>Enterobacteriaceae</taxon>
        <taxon>Shigella</taxon>
    </lineage>
</organism>
<dbReference type="EC" id="7.6.2.11" evidence="1"/>
<dbReference type="EMBL" id="CP000038">
    <property type="protein sequence ID" value="AAZ87869.1"/>
    <property type="molecule type" value="Genomic_DNA"/>
</dbReference>
<dbReference type="RefSeq" id="WP_000531601.1">
    <property type="nucleotide sequence ID" value="NC_007384.1"/>
</dbReference>
<dbReference type="SMR" id="Q3Z2Z3"/>
<dbReference type="GeneID" id="93776284"/>
<dbReference type="KEGG" id="ssn:SSON_1144"/>
<dbReference type="HOGENOM" id="CLU_000604_1_1_6"/>
<dbReference type="Proteomes" id="UP000002529">
    <property type="component" value="Chromosome"/>
</dbReference>
<dbReference type="GO" id="GO:0043190">
    <property type="term" value="C:ATP-binding cassette (ABC) transporter complex"/>
    <property type="evidence" value="ECO:0007669"/>
    <property type="project" value="InterPro"/>
</dbReference>
<dbReference type="GO" id="GO:0015594">
    <property type="term" value="F:ABC-type putrescine transporter activity"/>
    <property type="evidence" value="ECO:0007669"/>
    <property type="project" value="InterPro"/>
</dbReference>
<dbReference type="GO" id="GO:0005524">
    <property type="term" value="F:ATP binding"/>
    <property type="evidence" value="ECO:0007669"/>
    <property type="project" value="UniProtKB-KW"/>
</dbReference>
<dbReference type="GO" id="GO:0016887">
    <property type="term" value="F:ATP hydrolysis activity"/>
    <property type="evidence" value="ECO:0007669"/>
    <property type="project" value="InterPro"/>
</dbReference>
<dbReference type="CDD" id="cd03300">
    <property type="entry name" value="ABC_PotA_N"/>
    <property type="match status" value="1"/>
</dbReference>
<dbReference type="FunFam" id="2.40.50.100:FF:000017">
    <property type="entry name" value="Spermidine/putrescine import ATP-binding protein PotA"/>
    <property type="match status" value="1"/>
</dbReference>
<dbReference type="FunFam" id="3.40.50.300:FF:000133">
    <property type="entry name" value="Spermidine/putrescine import ATP-binding protein PotA"/>
    <property type="match status" value="1"/>
</dbReference>
<dbReference type="Gene3D" id="2.40.50.100">
    <property type="match status" value="1"/>
</dbReference>
<dbReference type="Gene3D" id="3.40.50.300">
    <property type="entry name" value="P-loop containing nucleotide triphosphate hydrolases"/>
    <property type="match status" value="1"/>
</dbReference>
<dbReference type="InterPro" id="IPR003593">
    <property type="entry name" value="AAA+_ATPase"/>
</dbReference>
<dbReference type="InterPro" id="IPR050093">
    <property type="entry name" value="ABC_SmlMolc_Importer"/>
</dbReference>
<dbReference type="InterPro" id="IPR003439">
    <property type="entry name" value="ABC_transporter-like_ATP-bd"/>
</dbReference>
<dbReference type="InterPro" id="IPR017871">
    <property type="entry name" value="ABC_transporter-like_CS"/>
</dbReference>
<dbReference type="InterPro" id="IPR008995">
    <property type="entry name" value="Mo/tungstate-bd_C_term_dom"/>
</dbReference>
<dbReference type="InterPro" id="IPR027417">
    <property type="entry name" value="P-loop_NTPase"/>
</dbReference>
<dbReference type="InterPro" id="IPR005893">
    <property type="entry name" value="PotA-like"/>
</dbReference>
<dbReference type="InterPro" id="IPR017879">
    <property type="entry name" value="PotA_ATP-bd"/>
</dbReference>
<dbReference type="InterPro" id="IPR013611">
    <property type="entry name" value="Transp-assoc_OB_typ2"/>
</dbReference>
<dbReference type="NCBIfam" id="TIGR01187">
    <property type="entry name" value="potA"/>
    <property type="match status" value="1"/>
</dbReference>
<dbReference type="NCBIfam" id="NF006987">
    <property type="entry name" value="PRK09452.1"/>
    <property type="match status" value="1"/>
</dbReference>
<dbReference type="PANTHER" id="PTHR42781">
    <property type="entry name" value="SPERMIDINE/PUTRESCINE IMPORT ATP-BINDING PROTEIN POTA"/>
    <property type="match status" value="1"/>
</dbReference>
<dbReference type="PANTHER" id="PTHR42781:SF4">
    <property type="entry name" value="SPERMIDINE_PUTRESCINE IMPORT ATP-BINDING PROTEIN POTA"/>
    <property type="match status" value="1"/>
</dbReference>
<dbReference type="Pfam" id="PF00005">
    <property type="entry name" value="ABC_tran"/>
    <property type="match status" value="1"/>
</dbReference>
<dbReference type="Pfam" id="PF08402">
    <property type="entry name" value="TOBE_2"/>
    <property type="match status" value="1"/>
</dbReference>
<dbReference type="SMART" id="SM00382">
    <property type="entry name" value="AAA"/>
    <property type="match status" value="1"/>
</dbReference>
<dbReference type="SUPFAM" id="SSF50331">
    <property type="entry name" value="MOP-like"/>
    <property type="match status" value="1"/>
</dbReference>
<dbReference type="SUPFAM" id="SSF52540">
    <property type="entry name" value="P-loop containing nucleoside triphosphate hydrolases"/>
    <property type="match status" value="1"/>
</dbReference>
<dbReference type="PROSITE" id="PS00211">
    <property type="entry name" value="ABC_TRANSPORTER_1"/>
    <property type="match status" value="1"/>
</dbReference>
<dbReference type="PROSITE" id="PS50893">
    <property type="entry name" value="ABC_TRANSPORTER_2"/>
    <property type="match status" value="1"/>
</dbReference>
<dbReference type="PROSITE" id="PS51305">
    <property type="entry name" value="POTA"/>
    <property type="match status" value="1"/>
</dbReference>
<proteinExistence type="inferred from homology"/>
<gene>
    <name evidence="1" type="primary">potA</name>
    <name type="ordered locus">SSON_1144</name>
</gene>
<keyword id="KW-0067">ATP-binding</keyword>
<keyword id="KW-0997">Cell inner membrane</keyword>
<keyword id="KW-1003">Cell membrane</keyword>
<keyword id="KW-0472">Membrane</keyword>
<keyword id="KW-0547">Nucleotide-binding</keyword>
<keyword id="KW-1185">Reference proteome</keyword>
<keyword id="KW-1278">Translocase</keyword>
<keyword id="KW-0813">Transport</keyword>
<name>POTA_SHISS</name>
<protein>
    <recommendedName>
        <fullName evidence="1">Spermidine/putrescine import ATP-binding protein PotA</fullName>
        <ecNumber evidence="1">7.6.2.11</ecNumber>
    </recommendedName>
</protein>
<comment type="function">
    <text evidence="1">Part of the ABC transporter complex PotABCD involved in spermidine/putrescine import. Responsible for energy coupling to the transport system.</text>
</comment>
<comment type="catalytic activity">
    <reaction evidence="1">
        <text>ATP + H2O + polyamine-[polyamine-binding protein]Side 1 = ADP + phosphate + polyamineSide 2 + [polyamine-binding protein]Side 1.</text>
        <dbReference type="EC" id="7.6.2.11"/>
    </reaction>
</comment>
<comment type="subunit">
    <text evidence="1">The complex is composed of two ATP-binding proteins (PotA), two transmembrane proteins (PotB and PotC) and a solute-binding protein (PotD).</text>
</comment>
<comment type="subcellular location">
    <subcellularLocation>
        <location evidence="1">Cell inner membrane</location>
        <topology evidence="1">Peripheral membrane protein</topology>
    </subcellularLocation>
</comment>
<comment type="similarity">
    <text evidence="1">Belongs to the ABC transporter superfamily. Spermidine/putrescine importer (TC 3.A.1.11.1) family.</text>
</comment>